<name>ENO_KINRD</name>
<proteinExistence type="inferred from homology"/>
<accession>A6W6X2</accession>
<comment type="function">
    <text evidence="1">Catalyzes the reversible conversion of 2-phosphoglycerate (2-PG) into phosphoenolpyruvate (PEP). It is essential for the degradation of carbohydrates via glycolysis.</text>
</comment>
<comment type="catalytic activity">
    <reaction evidence="1">
        <text>(2R)-2-phosphoglycerate = phosphoenolpyruvate + H2O</text>
        <dbReference type="Rhea" id="RHEA:10164"/>
        <dbReference type="ChEBI" id="CHEBI:15377"/>
        <dbReference type="ChEBI" id="CHEBI:58289"/>
        <dbReference type="ChEBI" id="CHEBI:58702"/>
        <dbReference type="EC" id="4.2.1.11"/>
    </reaction>
</comment>
<comment type="cofactor">
    <cofactor evidence="1">
        <name>Mg(2+)</name>
        <dbReference type="ChEBI" id="CHEBI:18420"/>
    </cofactor>
    <text evidence="1">Binds a second Mg(2+) ion via substrate during catalysis.</text>
</comment>
<comment type="pathway">
    <text evidence="1">Carbohydrate degradation; glycolysis; pyruvate from D-glyceraldehyde 3-phosphate: step 4/5.</text>
</comment>
<comment type="subcellular location">
    <subcellularLocation>
        <location evidence="1">Cytoplasm</location>
    </subcellularLocation>
    <subcellularLocation>
        <location evidence="1">Secreted</location>
    </subcellularLocation>
    <subcellularLocation>
        <location evidence="1">Cell surface</location>
    </subcellularLocation>
    <text evidence="1">Fractions of enolase are present in both the cytoplasm and on the cell surface.</text>
</comment>
<comment type="similarity">
    <text evidence="1">Belongs to the enolase family.</text>
</comment>
<feature type="chain" id="PRO_1000079139" description="Enolase">
    <location>
        <begin position="1"/>
        <end position="431"/>
    </location>
</feature>
<feature type="active site" description="Proton donor" evidence="1">
    <location>
        <position position="205"/>
    </location>
</feature>
<feature type="active site" description="Proton acceptor" evidence="1">
    <location>
        <position position="335"/>
    </location>
</feature>
<feature type="binding site" evidence="1">
    <location>
        <position position="163"/>
    </location>
    <ligand>
        <name>(2R)-2-phosphoglycerate</name>
        <dbReference type="ChEBI" id="CHEBI:58289"/>
    </ligand>
</feature>
<feature type="binding site" evidence="1">
    <location>
        <position position="242"/>
    </location>
    <ligand>
        <name>Mg(2+)</name>
        <dbReference type="ChEBI" id="CHEBI:18420"/>
    </ligand>
</feature>
<feature type="binding site" evidence="1">
    <location>
        <position position="283"/>
    </location>
    <ligand>
        <name>Mg(2+)</name>
        <dbReference type="ChEBI" id="CHEBI:18420"/>
    </ligand>
</feature>
<feature type="binding site" evidence="1">
    <location>
        <position position="310"/>
    </location>
    <ligand>
        <name>Mg(2+)</name>
        <dbReference type="ChEBI" id="CHEBI:18420"/>
    </ligand>
</feature>
<feature type="binding site" evidence="1">
    <location>
        <position position="335"/>
    </location>
    <ligand>
        <name>(2R)-2-phosphoglycerate</name>
        <dbReference type="ChEBI" id="CHEBI:58289"/>
    </ligand>
</feature>
<feature type="binding site" evidence="1">
    <location>
        <position position="364"/>
    </location>
    <ligand>
        <name>(2R)-2-phosphoglycerate</name>
        <dbReference type="ChEBI" id="CHEBI:58289"/>
    </ligand>
</feature>
<feature type="binding site" evidence="1">
    <location>
        <position position="365"/>
    </location>
    <ligand>
        <name>(2R)-2-phosphoglycerate</name>
        <dbReference type="ChEBI" id="CHEBI:58289"/>
    </ligand>
</feature>
<feature type="binding site" evidence="1">
    <location>
        <position position="386"/>
    </location>
    <ligand>
        <name>(2R)-2-phosphoglycerate</name>
        <dbReference type="ChEBI" id="CHEBI:58289"/>
    </ligand>
</feature>
<evidence type="ECO:0000255" key="1">
    <source>
        <dbReference type="HAMAP-Rule" id="MF_00318"/>
    </source>
</evidence>
<protein>
    <recommendedName>
        <fullName evidence="1">Enolase</fullName>
        <ecNumber evidence="1">4.2.1.11</ecNumber>
    </recommendedName>
    <alternativeName>
        <fullName evidence="1">2-phospho-D-glycerate hydro-lyase</fullName>
    </alternativeName>
    <alternativeName>
        <fullName evidence="1">2-phosphoglycerate dehydratase</fullName>
    </alternativeName>
</protein>
<organism>
    <name type="scientific">Kineococcus radiotolerans (strain ATCC BAA-149 / DSM 14245 / SRS30216)</name>
    <dbReference type="NCBI Taxonomy" id="266940"/>
    <lineage>
        <taxon>Bacteria</taxon>
        <taxon>Bacillati</taxon>
        <taxon>Actinomycetota</taxon>
        <taxon>Actinomycetes</taxon>
        <taxon>Kineosporiales</taxon>
        <taxon>Kineosporiaceae</taxon>
        <taxon>Kineococcus</taxon>
    </lineage>
</organism>
<sequence>MATIEAVGAREILDSRGNPTVEVEVLLDDGTFARAAVPSGASTGAYEANERRDGDKGRYGGKGVEQAVEAVIEEVGPALVGHDAHEQRIIDRVMLDLDGTPTKSRLGANAILGVSLAVAKAAASAADLPLFRYLGGPNAHVLPVPMMNIVNGGAHADTGVAIQEFMIAPVGAASFREALRWGAETYHALKSVLKQRGLATGLGDEGGFAPDLPSNKDALDLIVEAIGKTGFAVGSDIALALDVAATEFHGADGYDFEGSKRSAEWMTGYYEGLVSEYPLVSIEDPLSEDDWDGWQHITNALGGKLQLVGDDLFVTNPERLQKGIDLSAGNSMLVKVNQIGSLTETLDAVDLAHRNGFSTMMSHRSGETEDTTIADLAVAVGSGQIKTGAPARSERVAKYNQLLRIEEELDDAAVYAGAKAFPRSAGFTGRA</sequence>
<gene>
    <name evidence="1" type="primary">eno</name>
    <name type="ordered locus">Krad_1073</name>
</gene>
<reference key="1">
    <citation type="journal article" date="2008" name="PLoS ONE">
        <title>Survival in nuclear waste, extreme resistance, and potential applications gleaned from the genome sequence of Kineococcus radiotolerans SRS30216.</title>
        <authorList>
            <person name="Bagwell C.E."/>
            <person name="Bhat S."/>
            <person name="Hawkins G.M."/>
            <person name="Smith B.W."/>
            <person name="Biswas T."/>
            <person name="Hoover T.R."/>
            <person name="Saunders E."/>
            <person name="Han C.S."/>
            <person name="Tsodikov O.V."/>
            <person name="Shimkets L.J."/>
        </authorList>
    </citation>
    <scope>NUCLEOTIDE SEQUENCE [LARGE SCALE GENOMIC DNA]</scope>
    <source>
        <strain>ATCC BAA-149 / DSM 14245 / SRS30216</strain>
    </source>
</reference>
<dbReference type="EC" id="4.2.1.11" evidence="1"/>
<dbReference type="EMBL" id="CP000750">
    <property type="protein sequence ID" value="ABS02561.1"/>
    <property type="molecule type" value="Genomic_DNA"/>
</dbReference>
<dbReference type="RefSeq" id="WP_012084587.1">
    <property type="nucleotide sequence ID" value="NC_009664.2"/>
</dbReference>
<dbReference type="SMR" id="A6W6X2"/>
<dbReference type="STRING" id="266940.Krad_1073"/>
<dbReference type="KEGG" id="kra:Krad_1073"/>
<dbReference type="eggNOG" id="COG0148">
    <property type="taxonomic scope" value="Bacteria"/>
</dbReference>
<dbReference type="HOGENOM" id="CLU_031223_2_1_11"/>
<dbReference type="OrthoDB" id="9804716at2"/>
<dbReference type="UniPathway" id="UPA00109">
    <property type="reaction ID" value="UER00187"/>
</dbReference>
<dbReference type="Proteomes" id="UP000001116">
    <property type="component" value="Chromosome"/>
</dbReference>
<dbReference type="GO" id="GO:0009986">
    <property type="term" value="C:cell surface"/>
    <property type="evidence" value="ECO:0007669"/>
    <property type="project" value="UniProtKB-SubCell"/>
</dbReference>
<dbReference type="GO" id="GO:0005576">
    <property type="term" value="C:extracellular region"/>
    <property type="evidence" value="ECO:0007669"/>
    <property type="project" value="UniProtKB-SubCell"/>
</dbReference>
<dbReference type="GO" id="GO:0000015">
    <property type="term" value="C:phosphopyruvate hydratase complex"/>
    <property type="evidence" value="ECO:0007669"/>
    <property type="project" value="InterPro"/>
</dbReference>
<dbReference type="GO" id="GO:0000287">
    <property type="term" value="F:magnesium ion binding"/>
    <property type="evidence" value="ECO:0007669"/>
    <property type="project" value="UniProtKB-UniRule"/>
</dbReference>
<dbReference type="GO" id="GO:0004634">
    <property type="term" value="F:phosphopyruvate hydratase activity"/>
    <property type="evidence" value="ECO:0007669"/>
    <property type="project" value="UniProtKB-UniRule"/>
</dbReference>
<dbReference type="GO" id="GO:0006096">
    <property type="term" value="P:glycolytic process"/>
    <property type="evidence" value="ECO:0007669"/>
    <property type="project" value="UniProtKB-UniRule"/>
</dbReference>
<dbReference type="CDD" id="cd03313">
    <property type="entry name" value="enolase"/>
    <property type="match status" value="1"/>
</dbReference>
<dbReference type="FunFam" id="3.20.20.120:FF:000001">
    <property type="entry name" value="Enolase"/>
    <property type="match status" value="1"/>
</dbReference>
<dbReference type="FunFam" id="3.30.390.10:FF:000001">
    <property type="entry name" value="Enolase"/>
    <property type="match status" value="1"/>
</dbReference>
<dbReference type="Gene3D" id="3.20.20.120">
    <property type="entry name" value="Enolase-like C-terminal domain"/>
    <property type="match status" value="1"/>
</dbReference>
<dbReference type="Gene3D" id="3.30.390.10">
    <property type="entry name" value="Enolase-like, N-terminal domain"/>
    <property type="match status" value="1"/>
</dbReference>
<dbReference type="HAMAP" id="MF_00318">
    <property type="entry name" value="Enolase"/>
    <property type="match status" value="1"/>
</dbReference>
<dbReference type="InterPro" id="IPR000941">
    <property type="entry name" value="Enolase"/>
</dbReference>
<dbReference type="InterPro" id="IPR036849">
    <property type="entry name" value="Enolase-like_C_sf"/>
</dbReference>
<dbReference type="InterPro" id="IPR029017">
    <property type="entry name" value="Enolase-like_N"/>
</dbReference>
<dbReference type="InterPro" id="IPR020810">
    <property type="entry name" value="Enolase_C"/>
</dbReference>
<dbReference type="InterPro" id="IPR020809">
    <property type="entry name" value="Enolase_CS"/>
</dbReference>
<dbReference type="InterPro" id="IPR020811">
    <property type="entry name" value="Enolase_N"/>
</dbReference>
<dbReference type="NCBIfam" id="TIGR01060">
    <property type="entry name" value="eno"/>
    <property type="match status" value="1"/>
</dbReference>
<dbReference type="PANTHER" id="PTHR11902">
    <property type="entry name" value="ENOLASE"/>
    <property type="match status" value="1"/>
</dbReference>
<dbReference type="PANTHER" id="PTHR11902:SF1">
    <property type="entry name" value="ENOLASE"/>
    <property type="match status" value="1"/>
</dbReference>
<dbReference type="Pfam" id="PF00113">
    <property type="entry name" value="Enolase_C"/>
    <property type="match status" value="1"/>
</dbReference>
<dbReference type="Pfam" id="PF03952">
    <property type="entry name" value="Enolase_N"/>
    <property type="match status" value="1"/>
</dbReference>
<dbReference type="PIRSF" id="PIRSF001400">
    <property type="entry name" value="Enolase"/>
    <property type="match status" value="1"/>
</dbReference>
<dbReference type="PRINTS" id="PR00148">
    <property type="entry name" value="ENOLASE"/>
</dbReference>
<dbReference type="SFLD" id="SFLDS00001">
    <property type="entry name" value="Enolase"/>
    <property type="match status" value="1"/>
</dbReference>
<dbReference type="SFLD" id="SFLDF00002">
    <property type="entry name" value="enolase"/>
    <property type="match status" value="1"/>
</dbReference>
<dbReference type="SMART" id="SM01192">
    <property type="entry name" value="Enolase_C"/>
    <property type="match status" value="1"/>
</dbReference>
<dbReference type="SMART" id="SM01193">
    <property type="entry name" value="Enolase_N"/>
    <property type="match status" value="1"/>
</dbReference>
<dbReference type="SUPFAM" id="SSF51604">
    <property type="entry name" value="Enolase C-terminal domain-like"/>
    <property type="match status" value="1"/>
</dbReference>
<dbReference type="SUPFAM" id="SSF54826">
    <property type="entry name" value="Enolase N-terminal domain-like"/>
    <property type="match status" value="1"/>
</dbReference>
<dbReference type="PROSITE" id="PS00164">
    <property type="entry name" value="ENOLASE"/>
    <property type="match status" value="1"/>
</dbReference>
<keyword id="KW-0963">Cytoplasm</keyword>
<keyword id="KW-0324">Glycolysis</keyword>
<keyword id="KW-0456">Lyase</keyword>
<keyword id="KW-0460">Magnesium</keyword>
<keyword id="KW-0479">Metal-binding</keyword>
<keyword id="KW-1185">Reference proteome</keyword>
<keyword id="KW-0964">Secreted</keyword>